<gene>
    <name evidence="1" type="primary">rsmC</name>
    <name type="ordered locus">plu4252</name>
</gene>
<proteinExistence type="inferred from homology"/>
<organism>
    <name type="scientific">Photorhabdus laumondii subsp. laumondii (strain DSM 15139 / CIP 105565 / TT01)</name>
    <name type="common">Photorhabdus luminescens subsp. laumondii</name>
    <dbReference type="NCBI Taxonomy" id="243265"/>
    <lineage>
        <taxon>Bacteria</taxon>
        <taxon>Pseudomonadati</taxon>
        <taxon>Pseudomonadota</taxon>
        <taxon>Gammaproteobacteria</taxon>
        <taxon>Enterobacterales</taxon>
        <taxon>Morganellaceae</taxon>
        <taxon>Photorhabdus</taxon>
    </lineage>
</organism>
<dbReference type="EC" id="2.1.1.172" evidence="1"/>
<dbReference type="EMBL" id="BX571873">
    <property type="protein sequence ID" value="CAE16624.1"/>
    <property type="molecule type" value="Genomic_DNA"/>
</dbReference>
<dbReference type="RefSeq" id="WP_011148349.1">
    <property type="nucleotide sequence ID" value="NC_005126.1"/>
</dbReference>
<dbReference type="SMR" id="Q7MZN0"/>
<dbReference type="STRING" id="243265.plu4252"/>
<dbReference type="GeneID" id="48850462"/>
<dbReference type="KEGG" id="plu:plu4252"/>
<dbReference type="eggNOG" id="COG2813">
    <property type="taxonomic scope" value="Bacteria"/>
</dbReference>
<dbReference type="HOGENOM" id="CLU_049581_0_1_6"/>
<dbReference type="OrthoDB" id="9816072at2"/>
<dbReference type="Proteomes" id="UP000002514">
    <property type="component" value="Chromosome"/>
</dbReference>
<dbReference type="GO" id="GO:0005737">
    <property type="term" value="C:cytoplasm"/>
    <property type="evidence" value="ECO:0007669"/>
    <property type="project" value="UniProtKB-SubCell"/>
</dbReference>
<dbReference type="GO" id="GO:0052914">
    <property type="term" value="F:16S rRNA (guanine(1207)-N(2))-methyltransferase activity"/>
    <property type="evidence" value="ECO:0007669"/>
    <property type="project" value="UniProtKB-EC"/>
</dbReference>
<dbReference type="GO" id="GO:0003676">
    <property type="term" value="F:nucleic acid binding"/>
    <property type="evidence" value="ECO:0007669"/>
    <property type="project" value="InterPro"/>
</dbReference>
<dbReference type="CDD" id="cd02440">
    <property type="entry name" value="AdoMet_MTases"/>
    <property type="match status" value="1"/>
</dbReference>
<dbReference type="Gene3D" id="3.40.50.150">
    <property type="entry name" value="Vaccinia Virus protein VP39"/>
    <property type="match status" value="2"/>
</dbReference>
<dbReference type="HAMAP" id="MF_01862">
    <property type="entry name" value="16SrRNA_methyltr_C"/>
    <property type="match status" value="1"/>
</dbReference>
<dbReference type="InterPro" id="IPR002052">
    <property type="entry name" value="DNA_methylase_N6_adenine_CS"/>
</dbReference>
<dbReference type="InterPro" id="IPR013675">
    <property type="entry name" value="Mtase_sm_N"/>
</dbReference>
<dbReference type="InterPro" id="IPR023543">
    <property type="entry name" value="rRNA_ssu_MeTfrase_C"/>
</dbReference>
<dbReference type="InterPro" id="IPR046977">
    <property type="entry name" value="RsmC/RlmG"/>
</dbReference>
<dbReference type="InterPro" id="IPR029063">
    <property type="entry name" value="SAM-dependent_MTases_sf"/>
</dbReference>
<dbReference type="InterPro" id="IPR007848">
    <property type="entry name" value="Small_mtfrase_dom"/>
</dbReference>
<dbReference type="NCBIfam" id="NF007023">
    <property type="entry name" value="PRK09489.1"/>
    <property type="match status" value="1"/>
</dbReference>
<dbReference type="PANTHER" id="PTHR47816">
    <property type="entry name" value="RIBOSOMAL RNA SMALL SUBUNIT METHYLTRANSFERASE C"/>
    <property type="match status" value="1"/>
</dbReference>
<dbReference type="PANTHER" id="PTHR47816:SF4">
    <property type="entry name" value="RIBOSOMAL RNA SMALL SUBUNIT METHYLTRANSFERASE C"/>
    <property type="match status" value="1"/>
</dbReference>
<dbReference type="Pfam" id="PF05175">
    <property type="entry name" value="MTS"/>
    <property type="match status" value="1"/>
</dbReference>
<dbReference type="Pfam" id="PF08468">
    <property type="entry name" value="MTS_N"/>
    <property type="match status" value="1"/>
</dbReference>
<dbReference type="SUPFAM" id="SSF53335">
    <property type="entry name" value="S-adenosyl-L-methionine-dependent methyltransferases"/>
    <property type="match status" value="1"/>
</dbReference>
<comment type="function">
    <text evidence="1">Specifically methylates the guanine in position 1207 of 16S rRNA in the 30S particle.</text>
</comment>
<comment type="catalytic activity">
    <reaction evidence="1">
        <text>guanosine(1207) in 16S rRNA + S-adenosyl-L-methionine = N(2)-methylguanosine(1207) in 16S rRNA + S-adenosyl-L-homocysteine + H(+)</text>
        <dbReference type="Rhea" id="RHEA:42736"/>
        <dbReference type="Rhea" id="RHEA-COMP:10213"/>
        <dbReference type="Rhea" id="RHEA-COMP:10214"/>
        <dbReference type="ChEBI" id="CHEBI:15378"/>
        <dbReference type="ChEBI" id="CHEBI:57856"/>
        <dbReference type="ChEBI" id="CHEBI:59789"/>
        <dbReference type="ChEBI" id="CHEBI:74269"/>
        <dbReference type="ChEBI" id="CHEBI:74481"/>
        <dbReference type="EC" id="2.1.1.172"/>
    </reaction>
</comment>
<comment type="subunit">
    <text evidence="1">Monomer.</text>
</comment>
<comment type="subcellular location">
    <subcellularLocation>
        <location evidence="1">Cytoplasm</location>
    </subcellularLocation>
</comment>
<comment type="similarity">
    <text evidence="1">Belongs to the methyltransferase superfamily. RsmC family.</text>
</comment>
<name>RSMC_PHOLL</name>
<reference key="1">
    <citation type="journal article" date="2003" name="Nat. Biotechnol.">
        <title>The genome sequence of the entomopathogenic bacterium Photorhabdus luminescens.</title>
        <authorList>
            <person name="Duchaud E."/>
            <person name="Rusniok C."/>
            <person name="Frangeul L."/>
            <person name="Buchrieser C."/>
            <person name="Givaudan A."/>
            <person name="Taourit S."/>
            <person name="Bocs S."/>
            <person name="Boursaux-Eude C."/>
            <person name="Chandler M."/>
            <person name="Charles J.-F."/>
            <person name="Dassa E."/>
            <person name="Derose R."/>
            <person name="Derzelle S."/>
            <person name="Freyssinet G."/>
            <person name="Gaudriault S."/>
            <person name="Medigue C."/>
            <person name="Lanois A."/>
            <person name="Powell K."/>
            <person name="Siguier P."/>
            <person name="Vincent R."/>
            <person name="Wingate V."/>
            <person name="Zouine M."/>
            <person name="Glaser P."/>
            <person name="Boemare N."/>
            <person name="Danchin A."/>
            <person name="Kunst F."/>
        </authorList>
    </citation>
    <scope>NUCLEOTIDE SEQUENCE [LARGE SCALE GENOMIC DNA]</scope>
    <source>
        <strain>DSM 15139 / CIP 105565 / TT01</strain>
    </source>
</reference>
<feature type="chain" id="PRO_0000369730" description="Ribosomal RNA small subunit methyltransferase C">
    <location>
        <begin position="1"/>
        <end position="338"/>
    </location>
</feature>
<keyword id="KW-0963">Cytoplasm</keyword>
<keyword id="KW-0489">Methyltransferase</keyword>
<keyword id="KW-1185">Reference proteome</keyword>
<keyword id="KW-0698">rRNA processing</keyword>
<keyword id="KW-0949">S-adenosyl-L-methionine</keyword>
<keyword id="KW-0808">Transferase</keyword>
<sequence>MSALTPASEVILRHREQFSSHHLLFAGDIQDTLATQIDAASVRVHTNQYHHWQSLIRTLGESAWFGLVAEKAFTQGCDTLIYYWPKSKQEARFQLRSLFSVLPKGINIFIVGENRSGVRSVDKLMDGMATFRKIDSARRCSLFYGQLEHEVQFEQDNWWNSYQVENVIVNTLPGVFSQDELDVGSRLLLSTFDKPLSGNLLDIACGAGVLAAVLGKKNPELALTLSDVNAAAIASSKATLKANKLEGHVVVSNVYSNIEDKFDWIISNPPFHEGLKTSLLATDDLIRQAPNHLKPGGKLRIVANAFLPYPDLLDKTFGTHEVIAQTGKFKVYQATKKF</sequence>
<evidence type="ECO:0000255" key="1">
    <source>
        <dbReference type="HAMAP-Rule" id="MF_01862"/>
    </source>
</evidence>
<accession>Q7MZN0</accession>
<protein>
    <recommendedName>
        <fullName evidence="1">Ribosomal RNA small subunit methyltransferase C</fullName>
        <ecNumber evidence="1">2.1.1.172</ecNumber>
    </recommendedName>
    <alternativeName>
        <fullName evidence="1">16S rRNA m2G1207 methyltransferase</fullName>
    </alternativeName>
    <alternativeName>
        <fullName evidence="1">rRNA (guanine-N(2)-)-methyltransferase RsmC</fullName>
    </alternativeName>
</protein>